<sequence length="77" mass="9260">MAIEKGEAFARRDIYIDYDFEDVTYRWDHRQGTIHVRFYGEAESPEPVEHDNRLFNDALRFGREITREEYETGFPKG</sequence>
<proteinExistence type="predicted"/>
<feature type="chain" id="PRO_0000449569" description="Immune protein Tis1">
    <location>
        <begin position="1"/>
        <end position="77"/>
    </location>
</feature>
<evidence type="ECO:0000269" key="1">
    <source>
    </source>
</evidence>
<evidence type="ECO:0000303" key="2">
    <source>
    </source>
</evidence>
<reference key="1">
    <citation type="journal article" date="2006" name="Genome Biol.">
        <title>Genomic analysis reveals that Pseudomonas aeruginosa virulence is combinatorial.</title>
        <authorList>
            <person name="Lee D.G."/>
            <person name="Urbach J.M."/>
            <person name="Wu G."/>
            <person name="Liberati N.T."/>
            <person name="Feinbaum R.L."/>
            <person name="Miyata S."/>
            <person name="Diggins L.T."/>
            <person name="He J."/>
            <person name="Saucier M."/>
            <person name="Deziel E."/>
            <person name="Friedman L."/>
            <person name="Li L."/>
            <person name="Grills G."/>
            <person name="Montgomery K."/>
            <person name="Kucherlapati R."/>
            <person name="Rahme L.G."/>
            <person name="Ausubel F.M."/>
        </authorList>
    </citation>
    <scope>NUCLEOTIDE SEQUENCE [LARGE SCALE GENOMIC DNA]</scope>
    <source>
        <strain>UCBPP-PA14</strain>
    </source>
</reference>
<reference key="2">
    <citation type="journal article" date="2019" name="Nature">
        <title>An interbacterial toxin inhibits target cell growth by synthesizing (p)ppApp.</title>
        <authorList>
            <person name="Ahmad S."/>
            <person name="Wang B."/>
            <person name="Walker M.D."/>
            <person name="Tran H.R."/>
            <person name="Stogios P.J."/>
            <person name="Savchenko A."/>
            <person name="Grant R.A."/>
            <person name="McArthur A.G."/>
            <person name="Laub M.T."/>
            <person name="Whitney J.C."/>
        </authorList>
    </citation>
    <scope>FUNCTION</scope>
    <source>
        <strain>UCBPP-PA14</strain>
    </source>
</reference>
<comment type="function">
    <text evidence="1">Immunity protein that plays a role in preventing early activation of toxin Tas1.</text>
</comment>
<organism>
    <name type="scientific">Pseudomonas aeruginosa (strain UCBPP-PA14)</name>
    <dbReference type="NCBI Taxonomy" id="208963"/>
    <lineage>
        <taxon>Bacteria</taxon>
        <taxon>Pseudomonadati</taxon>
        <taxon>Pseudomonadota</taxon>
        <taxon>Gammaproteobacteria</taxon>
        <taxon>Pseudomonadales</taxon>
        <taxon>Pseudomonadaceae</taxon>
        <taxon>Pseudomonas</taxon>
    </lineage>
</organism>
<accession>A0A0H2ZKA1</accession>
<name>TIS1_PSEAB</name>
<gene>
    <name type="primary">tis1</name>
    <name type="ordered locus">PA14_01130</name>
</gene>
<dbReference type="EMBL" id="CP000438">
    <property type="protein sequence ID" value="ABJ15049.1"/>
    <property type="molecule type" value="Genomic_DNA"/>
</dbReference>
<dbReference type="RefSeq" id="WP_003083689.1">
    <property type="nucleotide sequence ID" value="NZ_CP034244.1"/>
</dbReference>
<dbReference type="SMR" id="A0A0H2ZKA1"/>
<dbReference type="KEGG" id="pau:PA14_01130"/>
<dbReference type="HOGENOM" id="CLU_2555836_0_0_6"/>
<dbReference type="BioCyc" id="PAER208963:G1G74-96-MONOMER"/>
<dbReference type="Proteomes" id="UP000000653">
    <property type="component" value="Chromosome"/>
</dbReference>
<dbReference type="InterPro" id="IPR056206">
    <property type="entry name" value="Tis1_ImmP"/>
</dbReference>
<dbReference type="Pfam" id="PF24154">
    <property type="entry name" value="Tis1_ImmP"/>
    <property type="match status" value="1"/>
</dbReference>
<protein>
    <recommendedName>
        <fullName evidence="2">Immune protein Tis1</fullName>
    </recommendedName>
</protein>